<organism>
    <name type="scientific">Chloroflexus aurantiacus (strain ATCC 29364 / DSM 637 / Y-400-fl)</name>
    <dbReference type="NCBI Taxonomy" id="480224"/>
    <lineage>
        <taxon>Bacteria</taxon>
        <taxon>Bacillati</taxon>
        <taxon>Chloroflexota</taxon>
        <taxon>Chloroflexia</taxon>
        <taxon>Chloroflexales</taxon>
        <taxon>Chloroflexineae</taxon>
        <taxon>Chloroflexaceae</taxon>
        <taxon>Chloroflexus</taxon>
    </lineage>
</organism>
<name>FTHS_CHLSY</name>
<sequence>MKTSLQIAAEARLEPIAAIAERLGLPVRYLEPYGRYRGKIDLTFLDDYHDRPLGRYVLVSAITPTPLGEGKTTTAIGLAMALNRIGKRAAVTLRQSSLGPVFGIKGGGAGGGYSQIVPLVESILHLNGDIHAVSQAHNQLAALTDNSWYHGNPLDIDPDRIEIRRVVDVNDRFLRQVMIGLGGKQNGFPRQTGFDISVASELMAILAMVNGVGARAALRDLRSRIGRMVVAFRRDGTPITAEDVRGAGAATVLMREALKPNLMQTIENTPALIHAGPFANIAQGNSSILADLIALRCADYVVTEAGFGVDIGAEKFFNLKCRASGLWPDVAVIVATIRALKAHSGKYDIVAGKPLPPALLHENPDDVISGGANLRRQIENLHQFKVPVIVALNAYPEDTPAEIDAVAHIATTAGAAGMAVSNVYAAGSAGGVDLARLVIEIAERPGPRPVQFLYPLEWSLADKITTIAHRIYGAAAVTFSPTAAAQLAALEDAGFGNLPICMAKTHLSLSHDPALRGAPEGFTFPIREVRLSAGAGFILPIAGTTVTMPGLGAHPAAHQIDIDDEGNIVGLF</sequence>
<protein>
    <recommendedName>
        <fullName evidence="1">Formate--tetrahydrofolate ligase</fullName>
        <ecNumber evidence="1">6.3.4.3</ecNumber>
    </recommendedName>
    <alternativeName>
        <fullName evidence="1">Formyltetrahydrofolate synthetase</fullName>
        <shortName evidence="1">FHS</shortName>
        <shortName evidence="1">FTHFS</shortName>
    </alternativeName>
</protein>
<proteinExistence type="inferred from homology"/>
<gene>
    <name evidence="1" type="primary">fhs</name>
    <name type="ordered locus">Chy400_2847</name>
</gene>
<evidence type="ECO:0000255" key="1">
    <source>
        <dbReference type="HAMAP-Rule" id="MF_01543"/>
    </source>
</evidence>
<dbReference type="EC" id="6.3.4.3" evidence="1"/>
<dbReference type="EMBL" id="CP001364">
    <property type="protein sequence ID" value="ACM54235.1"/>
    <property type="molecule type" value="Genomic_DNA"/>
</dbReference>
<dbReference type="SMR" id="B9LKW0"/>
<dbReference type="KEGG" id="chl:Chy400_2847"/>
<dbReference type="HOGENOM" id="CLU_003601_3_3_0"/>
<dbReference type="OrthoDB" id="9761733at2"/>
<dbReference type="UniPathway" id="UPA00193"/>
<dbReference type="GO" id="GO:0005524">
    <property type="term" value="F:ATP binding"/>
    <property type="evidence" value="ECO:0007669"/>
    <property type="project" value="UniProtKB-UniRule"/>
</dbReference>
<dbReference type="GO" id="GO:0004329">
    <property type="term" value="F:formate-tetrahydrofolate ligase activity"/>
    <property type="evidence" value="ECO:0007669"/>
    <property type="project" value="UniProtKB-UniRule"/>
</dbReference>
<dbReference type="GO" id="GO:0035999">
    <property type="term" value="P:tetrahydrofolate interconversion"/>
    <property type="evidence" value="ECO:0007669"/>
    <property type="project" value="UniProtKB-UniRule"/>
</dbReference>
<dbReference type="CDD" id="cd00477">
    <property type="entry name" value="FTHFS"/>
    <property type="match status" value="1"/>
</dbReference>
<dbReference type="FunFam" id="3.30.1510.10:FF:000009">
    <property type="entry name" value="Formate--tetrahydrofolate ligase"/>
    <property type="match status" value="1"/>
</dbReference>
<dbReference type="FunFam" id="3.10.410.10:FF:000001">
    <property type="entry name" value="Putative formate--tetrahydrofolate ligase"/>
    <property type="match status" value="1"/>
</dbReference>
<dbReference type="Gene3D" id="3.30.1510.10">
    <property type="entry name" value="Domain 2, N(10)-formyltetrahydrofolate synthetase"/>
    <property type="match status" value="1"/>
</dbReference>
<dbReference type="Gene3D" id="3.10.410.10">
    <property type="entry name" value="Formyltetrahydrofolate synthetase, domain 3"/>
    <property type="match status" value="1"/>
</dbReference>
<dbReference type="Gene3D" id="3.40.50.300">
    <property type="entry name" value="P-loop containing nucleotide triphosphate hydrolases"/>
    <property type="match status" value="1"/>
</dbReference>
<dbReference type="HAMAP" id="MF_01543">
    <property type="entry name" value="FTHFS"/>
    <property type="match status" value="1"/>
</dbReference>
<dbReference type="InterPro" id="IPR000559">
    <property type="entry name" value="Formate_THF_ligase"/>
</dbReference>
<dbReference type="InterPro" id="IPR020628">
    <property type="entry name" value="Formate_THF_ligase_CS"/>
</dbReference>
<dbReference type="InterPro" id="IPR027417">
    <property type="entry name" value="P-loop_NTPase"/>
</dbReference>
<dbReference type="NCBIfam" id="NF010030">
    <property type="entry name" value="PRK13505.1"/>
    <property type="match status" value="1"/>
</dbReference>
<dbReference type="Pfam" id="PF01268">
    <property type="entry name" value="FTHFS"/>
    <property type="match status" value="1"/>
</dbReference>
<dbReference type="SUPFAM" id="SSF52540">
    <property type="entry name" value="P-loop containing nucleoside triphosphate hydrolases"/>
    <property type="match status" value="1"/>
</dbReference>
<dbReference type="PROSITE" id="PS00721">
    <property type="entry name" value="FTHFS_1"/>
    <property type="match status" value="1"/>
</dbReference>
<dbReference type="PROSITE" id="PS00722">
    <property type="entry name" value="FTHFS_2"/>
    <property type="match status" value="1"/>
</dbReference>
<comment type="catalytic activity">
    <reaction evidence="1">
        <text>(6S)-5,6,7,8-tetrahydrofolate + formate + ATP = (6R)-10-formyltetrahydrofolate + ADP + phosphate</text>
        <dbReference type="Rhea" id="RHEA:20221"/>
        <dbReference type="ChEBI" id="CHEBI:15740"/>
        <dbReference type="ChEBI" id="CHEBI:30616"/>
        <dbReference type="ChEBI" id="CHEBI:43474"/>
        <dbReference type="ChEBI" id="CHEBI:57453"/>
        <dbReference type="ChEBI" id="CHEBI:195366"/>
        <dbReference type="ChEBI" id="CHEBI:456216"/>
        <dbReference type="EC" id="6.3.4.3"/>
    </reaction>
</comment>
<comment type="pathway">
    <text evidence="1">One-carbon metabolism; tetrahydrofolate interconversion.</text>
</comment>
<comment type="similarity">
    <text evidence="1">Belongs to the formate--tetrahydrofolate ligase family.</text>
</comment>
<accession>B9LKW0</accession>
<keyword id="KW-0067">ATP-binding</keyword>
<keyword id="KW-0436">Ligase</keyword>
<keyword id="KW-0547">Nucleotide-binding</keyword>
<keyword id="KW-0554">One-carbon metabolism</keyword>
<feature type="chain" id="PRO_1000185250" description="Formate--tetrahydrofolate ligase">
    <location>
        <begin position="1"/>
        <end position="572"/>
    </location>
</feature>
<feature type="binding site" evidence="1">
    <location>
        <begin position="65"/>
        <end position="72"/>
    </location>
    <ligand>
        <name>ATP</name>
        <dbReference type="ChEBI" id="CHEBI:30616"/>
    </ligand>
</feature>
<reference key="1">
    <citation type="submission" date="2009-01" db="EMBL/GenBank/DDBJ databases">
        <title>Complete sequence of Chloroflexus sp. Y-400-fl.</title>
        <authorList>
            <consortium name="US DOE Joint Genome Institute"/>
            <person name="Lucas S."/>
            <person name="Copeland A."/>
            <person name="Lapidus A."/>
            <person name="Glavina del Rio T."/>
            <person name="Dalin E."/>
            <person name="Tice H."/>
            <person name="Bruce D."/>
            <person name="Goodwin L."/>
            <person name="Pitluck S."/>
            <person name="Sims D."/>
            <person name="Kiss H."/>
            <person name="Brettin T."/>
            <person name="Detter J.C."/>
            <person name="Han C."/>
            <person name="Larimer F."/>
            <person name="Land M."/>
            <person name="Hauser L."/>
            <person name="Kyrpides N."/>
            <person name="Ovchinnikova G."/>
            <person name="Bryant D.A."/>
            <person name="Richardson P."/>
        </authorList>
    </citation>
    <scope>NUCLEOTIDE SEQUENCE [LARGE SCALE GENOMIC DNA]</scope>
    <source>
        <strain>ATCC 29364 / DSM 637 / Y-400-fl</strain>
    </source>
</reference>